<organism>
    <name type="scientific">Halorhodospira halophila (strain DSM 244 / SL1)</name>
    <name type="common">Ectothiorhodospira halophila (strain DSM 244 / SL1)</name>
    <dbReference type="NCBI Taxonomy" id="349124"/>
    <lineage>
        <taxon>Bacteria</taxon>
        <taxon>Pseudomonadati</taxon>
        <taxon>Pseudomonadota</taxon>
        <taxon>Gammaproteobacteria</taxon>
        <taxon>Chromatiales</taxon>
        <taxon>Ectothiorhodospiraceae</taxon>
        <taxon>Halorhodospira</taxon>
    </lineage>
</organism>
<name>LPXA_HALHL</name>
<accession>A1WX11</accession>
<comment type="function">
    <text evidence="1">Involved in the biosynthesis of lipid A, a phosphorylated glycolipid that anchors the lipopolysaccharide to the outer membrane of the cell.</text>
</comment>
<comment type="catalytic activity">
    <reaction evidence="1">
        <text>a (3R)-hydroxyacyl-[ACP] + UDP-N-acetyl-alpha-D-glucosamine = a UDP-3-O-[(3R)-3-hydroxyacyl]-N-acetyl-alpha-D-glucosamine + holo-[ACP]</text>
        <dbReference type="Rhea" id="RHEA:67812"/>
        <dbReference type="Rhea" id="RHEA-COMP:9685"/>
        <dbReference type="Rhea" id="RHEA-COMP:9945"/>
        <dbReference type="ChEBI" id="CHEBI:57705"/>
        <dbReference type="ChEBI" id="CHEBI:64479"/>
        <dbReference type="ChEBI" id="CHEBI:78827"/>
        <dbReference type="ChEBI" id="CHEBI:173225"/>
        <dbReference type="EC" id="2.3.1.129"/>
    </reaction>
</comment>
<comment type="pathway">
    <text evidence="1">Glycolipid biosynthesis; lipid IV(A) biosynthesis; lipid IV(A) from (3R)-3-hydroxytetradecanoyl-[acyl-carrier-protein] and UDP-N-acetyl-alpha-D-glucosamine: step 1/6.</text>
</comment>
<comment type="subunit">
    <text evidence="1">Homotrimer.</text>
</comment>
<comment type="subcellular location">
    <subcellularLocation>
        <location evidence="1">Cytoplasm</location>
    </subcellularLocation>
</comment>
<comment type="similarity">
    <text evidence="1">Belongs to the transferase hexapeptide repeat family. LpxA subfamily.</text>
</comment>
<reference key="1">
    <citation type="submission" date="2006-12" db="EMBL/GenBank/DDBJ databases">
        <title>Complete sequence of Halorhodospira halophila SL1.</title>
        <authorList>
            <consortium name="US DOE Joint Genome Institute"/>
            <person name="Copeland A."/>
            <person name="Lucas S."/>
            <person name="Lapidus A."/>
            <person name="Barry K."/>
            <person name="Detter J.C."/>
            <person name="Glavina del Rio T."/>
            <person name="Hammon N."/>
            <person name="Israni S."/>
            <person name="Dalin E."/>
            <person name="Tice H."/>
            <person name="Pitluck S."/>
            <person name="Saunders E."/>
            <person name="Brettin T."/>
            <person name="Bruce D."/>
            <person name="Han C."/>
            <person name="Tapia R."/>
            <person name="Schmutz J."/>
            <person name="Larimer F."/>
            <person name="Land M."/>
            <person name="Hauser L."/>
            <person name="Kyrpides N."/>
            <person name="Mikhailova N."/>
            <person name="Hoff W."/>
            <person name="Richardson P."/>
        </authorList>
    </citation>
    <scope>NUCLEOTIDE SEQUENCE [LARGE SCALE GENOMIC DNA]</scope>
    <source>
        <strain>DSM 244 / SL1</strain>
    </source>
</reference>
<sequence>MTRIHPNALVDPKARLGEEVEVGPFSVIGPDVEIDEGTWIGPHAVIQGPTRIGRDNRIYQFAALGEAPQHKGYQGEPTELVIGDGNTIREFVTCHRGTAQGRGETRIGDHNWLMAYCHIAHDCRLGNHLLFANSASLAGHVDVGDHATLGGFALVHQFCRIGPYAFCGFGSGINRDVPPFVTVSGQMAVPHGINSVGLRRHGFSRERIRDIKRAYRTIYRQGLRLDDAREALCQQLSHSADVQGMVDFIDNSQRGLLR</sequence>
<proteinExistence type="inferred from homology"/>
<gene>
    <name evidence="1" type="primary">lpxA</name>
    <name type="ordered locus">Hhal_1456</name>
</gene>
<keyword id="KW-0012">Acyltransferase</keyword>
<keyword id="KW-0963">Cytoplasm</keyword>
<keyword id="KW-0441">Lipid A biosynthesis</keyword>
<keyword id="KW-0444">Lipid biosynthesis</keyword>
<keyword id="KW-0443">Lipid metabolism</keyword>
<keyword id="KW-1185">Reference proteome</keyword>
<keyword id="KW-0677">Repeat</keyword>
<keyword id="KW-0808">Transferase</keyword>
<feature type="chain" id="PRO_0000302577" description="Acyl-[acyl-carrier-protein]--UDP-N-acetylglucosamine O-acyltransferase">
    <location>
        <begin position="1"/>
        <end position="258"/>
    </location>
</feature>
<protein>
    <recommendedName>
        <fullName evidence="1">Acyl-[acyl-carrier-protein]--UDP-N-acetylglucosamine O-acyltransferase</fullName>
        <shortName evidence="1">UDP-N-acetylglucosamine acyltransferase</shortName>
        <ecNumber evidence="1">2.3.1.129</ecNumber>
    </recommendedName>
</protein>
<evidence type="ECO:0000255" key="1">
    <source>
        <dbReference type="HAMAP-Rule" id="MF_00387"/>
    </source>
</evidence>
<dbReference type="EC" id="2.3.1.129" evidence="1"/>
<dbReference type="EMBL" id="CP000544">
    <property type="protein sequence ID" value="ABM62223.1"/>
    <property type="molecule type" value="Genomic_DNA"/>
</dbReference>
<dbReference type="RefSeq" id="WP_011814245.1">
    <property type="nucleotide sequence ID" value="NC_008789.1"/>
</dbReference>
<dbReference type="SMR" id="A1WX11"/>
<dbReference type="STRING" id="349124.Hhal_1456"/>
<dbReference type="KEGG" id="hha:Hhal_1456"/>
<dbReference type="eggNOG" id="COG1043">
    <property type="taxonomic scope" value="Bacteria"/>
</dbReference>
<dbReference type="HOGENOM" id="CLU_061249_0_0_6"/>
<dbReference type="OrthoDB" id="9807278at2"/>
<dbReference type="UniPathway" id="UPA00359">
    <property type="reaction ID" value="UER00477"/>
</dbReference>
<dbReference type="Proteomes" id="UP000000647">
    <property type="component" value="Chromosome"/>
</dbReference>
<dbReference type="GO" id="GO:0005737">
    <property type="term" value="C:cytoplasm"/>
    <property type="evidence" value="ECO:0007669"/>
    <property type="project" value="UniProtKB-SubCell"/>
</dbReference>
<dbReference type="GO" id="GO:0016020">
    <property type="term" value="C:membrane"/>
    <property type="evidence" value="ECO:0007669"/>
    <property type="project" value="GOC"/>
</dbReference>
<dbReference type="GO" id="GO:0008780">
    <property type="term" value="F:acyl-[acyl-carrier-protein]-UDP-N-acetylglucosamine O-acyltransferase activity"/>
    <property type="evidence" value="ECO:0007669"/>
    <property type="project" value="UniProtKB-UniRule"/>
</dbReference>
<dbReference type="GO" id="GO:0009245">
    <property type="term" value="P:lipid A biosynthetic process"/>
    <property type="evidence" value="ECO:0007669"/>
    <property type="project" value="UniProtKB-UniRule"/>
</dbReference>
<dbReference type="CDD" id="cd03351">
    <property type="entry name" value="LbH_UDP-GlcNAc_AT"/>
    <property type="match status" value="1"/>
</dbReference>
<dbReference type="Gene3D" id="2.160.10.10">
    <property type="entry name" value="Hexapeptide repeat proteins"/>
    <property type="match status" value="1"/>
</dbReference>
<dbReference type="Gene3D" id="1.20.1180.10">
    <property type="entry name" value="Udp N-acetylglucosamine O-acyltransferase, C-terminal domain"/>
    <property type="match status" value="1"/>
</dbReference>
<dbReference type="HAMAP" id="MF_00387">
    <property type="entry name" value="LpxA"/>
    <property type="match status" value="1"/>
</dbReference>
<dbReference type="InterPro" id="IPR029098">
    <property type="entry name" value="Acetyltransf_C"/>
</dbReference>
<dbReference type="InterPro" id="IPR037157">
    <property type="entry name" value="Acetyltransf_C_sf"/>
</dbReference>
<dbReference type="InterPro" id="IPR010137">
    <property type="entry name" value="Lipid_A_LpxA"/>
</dbReference>
<dbReference type="InterPro" id="IPR011004">
    <property type="entry name" value="Trimer_LpxA-like_sf"/>
</dbReference>
<dbReference type="NCBIfam" id="TIGR01852">
    <property type="entry name" value="lipid_A_lpxA"/>
    <property type="match status" value="1"/>
</dbReference>
<dbReference type="NCBIfam" id="NF003657">
    <property type="entry name" value="PRK05289.1"/>
    <property type="match status" value="1"/>
</dbReference>
<dbReference type="PANTHER" id="PTHR43480">
    <property type="entry name" value="ACYL-[ACYL-CARRIER-PROTEIN]--UDP-N-ACETYLGLUCOSAMINE O-ACYLTRANSFERASE"/>
    <property type="match status" value="1"/>
</dbReference>
<dbReference type="PANTHER" id="PTHR43480:SF1">
    <property type="entry name" value="ACYL-[ACYL-CARRIER-PROTEIN]--UDP-N-ACETYLGLUCOSAMINE O-ACYLTRANSFERASE, MITOCHONDRIAL-RELATED"/>
    <property type="match status" value="1"/>
</dbReference>
<dbReference type="Pfam" id="PF13720">
    <property type="entry name" value="Acetyltransf_11"/>
    <property type="match status" value="1"/>
</dbReference>
<dbReference type="PIRSF" id="PIRSF000456">
    <property type="entry name" value="UDP-GlcNAc_acltr"/>
    <property type="match status" value="1"/>
</dbReference>
<dbReference type="SUPFAM" id="SSF51161">
    <property type="entry name" value="Trimeric LpxA-like enzymes"/>
    <property type="match status" value="1"/>
</dbReference>